<dbReference type="EMBL" id="BA000011">
    <property type="protein sequence ID" value="BAB59676.1"/>
    <property type="molecule type" value="Genomic_DNA"/>
</dbReference>
<dbReference type="RefSeq" id="WP_010916792.1">
    <property type="nucleotide sequence ID" value="NC_002689.2"/>
</dbReference>
<dbReference type="SMR" id="Q97BC2"/>
<dbReference type="STRING" id="273116.gene:9381318"/>
<dbReference type="PaxDb" id="273116-14324749"/>
<dbReference type="GeneID" id="1441050"/>
<dbReference type="KEGG" id="tvo:TVG0524887"/>
<dbReference type="eggNOG" id="arCOG00470">
    <property type="taxonomic scope" value="Archaea"/>
</dbReference>
<dbReference type="HOGENOM" id="CLU_027255_1_1_2"/>
<dbReference type="OrthoDB" id="8658at2157"/>
<dbReference type="PhylomeDB" id="Q97BC2"/>
<dbReference type="Proteomes" id="UP000001017">
    <property type="component" value="Chromosome"/>
</dbReference>
<dbReference type="GO" id="GO:0005524">
    <property type="term" value="F:ATP binding"/>
    <property type="evidence" value="ECO:0007669"/>
    <property type="project" value="UniProtKB-UniRule"/>
</dbReference>
<dbReference type="GO" id="GO:0016887">
    <property type="term" value="F:ATP hydrolysis activity"/>
    <property type="evidence" value="ECO:0007669"/>
    <property type="project" value="InterPro"/>
</dbReference>
<dbReference type="GO" id="GO:0003689">
    <property type="term" value="F:DNA clamp loader activity"/>
    <property type="evidence" value="ECO:0007669"/>
    <property type="project" value="UniProtKB-UniRule"/>
</dbReference>
<dbReference type="GO" id="GO:0006260">
    <property type="term" value="P:DNA replication"/>
    <property type="evidence" value="ECO:0007669"/>
    <property type="project" value="UniProtKB-UniRule"/>
</dbReference>
<dbReference type="CDD" id="cd18140">
    <property type="entry name" value="HLD_clamp_RFC"/>
    <property type="match status" value="1"/>
</dbReference>
<dbReference type="Gene3D" id="1.10.8.60">
    <property type="match status" value="1"/>
</dbReference>
<dbReference type="Gene3D" id="3.40.50.300">
    <property type="entry name" value="P-loop containing nucleotide triphosphate hydrolases"/>
    <property type="match status" value="1"/>
</dbReference>
<dbReference type="HAMAP" id="MF_01508">
    <property type="entry name" value="RfcL"/>
    <property type="match status" value="1"/>
</dbReference>
<dbReference type="InterPro" id="IPR003593">
    <property type="entry name" value="AAA+_ATPase"/>
</dbReference>
<dbReference type="InterPro" id="IPR003959">
    <property type="entry name" value="ATPase_AAA_core"/>
</dbReference>
<dbReference type="InterPro" id="IPR027417">
    <property type="entry name" value="P-loop_NTPase"/>
</dbReference>
<dbReference type="InterPro" id="IPR023935">
    <property type="entry name" value="Rep_factor-C_lsu"/>
</dbReference>
<dbReference type="InterPro" id="IPR047854">
    <property type="entry name" value="RFC_lid"/>
</dbReference>
<dbReference type="NCBIfam" id="NF003229">
    <property type="entry name" value="PRK04195.1-5"/>
    <property type="match status" value="1"/>
</dbReference>
<dbReference type="PANTHER" id="PTHR23389">
    <property type="entry name" value="CHROMOSOME TRANSMISSION FIDELITY FACTOR 18"/>
    <property type="match status" value="1"/>
</dbReference>
<dbReference type="PANTHER" id="PTHR23389:SF6">
    <property type="entry name" value="REPLICATION FACTOR C SUBUNIT 1"/>
    <property type="match status" value="1"/>
</dbReference>
<dbReference type="Pfam" id="PF00004">
    <property type="entry name" value="AAA"/>
    <property type="match status" value="1"/>
</dbReference>
<dbReference type="SMART" id="SM00382">
    <property type="entry name" value="AAA"/>
    <property type="match status" value="1"/>
</dbReference>
<dbReference type="SUPFAM" id="SSF52540">
    <property type="entry name" value="P-loop containing nucleoside triphosphate hydrolases"/>
    <property type="match status" value="1"/>
</dbReference>
<organism>
    <name type="scientific">Thermoplasma volcanium (strain ATCC 51530 / DSM 4299 / JCM 9571 / NBRC 15438 / GSS1)</name>
    <dbReference type="NCBI Taxonomy" id="273116"/>
    <lineage>
        <taxon>Archaea</taxon>
        <taxon>Methanobacteriati</taxon>
        <taxon>Thermoplasmatota</taxon>
        <taxon>Thermoplasmata</taxon>
        <taxon>Thermoplasmatales</taxon>
        <taxon>Thermoplasmataceae</taxon>
        <taxon>Thermoplasma</taxon>
    </lineage>
</organism>
<proteinExistence type="inferred from homology"/>
<sequence>MEWADKYRPKRIEDLIVSEEIRQKIQSWIDAWEEGSPKKRALILYGVQGSGKTSAAYAIAGTFGLPVVEMNASEQRNRESMKATALMASLYADLGASDFRKPSKVILIDEADNIFESNNPKRGGDTGGVYELSKIVKETRNPVIITMNDFYEFRKKNYSSEVINNSESIEFKPYARRLDRNYNEFKKNVRNRIKWIINQEGFSLPDDIINSIIDKNAPDIRSIINDVEAAAVSQSSISQNNDRDTVESVYYLVDKAFKKNYDDTLKSIYGSDVDSDYFINWVEENLPSKTDDISDLNSAYEQLSFADHILWAIERKRHFDLMTFPMEIAGGLAYYIENPKHEYVKFHSPSYINSMSRSKERRHALNAVSLKIGLLLHMSGVESLNYVWFYRLMFKVNAGFRDTVYERLNLTQGEEAVLES</sequence>
<comment type="function">
    <text evidence="1">Part of the RFC clamp loader complex which loads the PCNA sliding clamp onto DNA.</text>
</comment>
<comment type="subunit">
    <text evidence="1">Heteromultimer composed of small subunits (RfcS) and large subunits (RfcL).</text>
</comment>
<comment type="similarity">
    <text evidence="1">Belongs to the activator 1 small subunits family. RfcL subfamily.</text>
</comment>
<feature type="chain" id="PRO_0000135969" description="Replication factor C large subunit">
    <location>
        <begin position="1"/>
        <end position="420"/>
    </location>
</feature>
<feature type="binding site" evidence="1">
    <location>
        <begin position="46"/>
        <end position="53"/>
    </location>
    <ligand>
        <name>ATP</name>
        <dbReference type="ChEBI" id="CHEBI:30616"/>
    </ligand>
</feature>
<accession>Q97BC2</accession>
<keyword id="KW-0067">ATP-binding</keyword>
<keyword id="KW-0235">DNA replication</keyword>
<keyword id="KW-0547">Nucleotide-binding</keyword>
<gene>
    <name evidence="1" type="primary">rfcL</name>
    <name type="ordered locus">TV0534</name>
    <name type="ORF">TVG0524887</name>
</gene>
<protein>
    <recommendedName>
        <fullName evidence="1">Replication factor C large subunit</fullName>
        <shortName evidence="1">RFC large subunit</shortName>
    </recommendedName>
    <alternativeName>
        <fullName evidence="1">Clamp loader large subunit</fullName>
    </alternativeName>
</protein>
<name>RFCL_THEVO</name>
<evidence type="ECO:0000255" key="1">
    <source>
        <dbReference type="HAMAP-Rule" id="MF_01508"/>
    </source>
</evidence>
<reference key="1">
    <citation type="journal article" date="2000" name="Proc. Natl. Acad. Sci. U.S.A.">
        <title>Archaeal adaptation to higher temperatures revealed by genomic sequence of Thermoplasma volcanium.</title>
        <authorList>
            <person name="Kawashima T."/>
            <person name="Amano N."/>
            <person name="Koike H."/>
            <person name="Makino S."/>
            <person name="Higuchi S."/>
            <person name="Kawashima-Ohya Y."/>
            <person name="Watanabe K."/>
            <person name="Yamazaki M."/>
            <person name="Kanehori K."/>
            <person name="Kawamoto T."/>
            <person name="Nunoshiba T."/>
            <person name="Yamamoto Y."/>
            <person name="Aramaki H."/>
            <person name="Makino K."/>
            <person name="Suzuki M."/>
        </authorList>
    </citation>
    <scope>NUCLEOTIDE SEQUENCE [LARGE SCALE GENOMIC DNA]</scope>
    <source>
        <strain>ATCC 51530 / DSM 4299 / JCM 9571 / NBRC 15438 / GSS1</strain>
    </source>
</reference>